<protein>
    <recommendedName>
        <fullName>Sperm surface protein Sp17</fullName>
    </recommendedName>
    <alternativeName>
        <fullName>Sperm autoantigenic protein 17</fullName>
    </alternativeName>
</protein>
<comment type="function">
    <text evidence="1">Sperm surface zona pellucida binding protein. Helps to bind spermatozoa to the zona pellucida with high affinity. Might function in binding zona pellucida and carbohydrates (By similarity).</text>
</comment>
<comment type="subunit">
    <text evidence="1">Homodimer. May interact with ROPN1 (By similarity).</text>
</comment>
<comment type="subcellular location">
    <subcellularLocation>
        <location evidence="4">Membrane</location>
        <topology evidence="4">Peripheral membrane protein</topology>
    </subcellularLocation>
</comment>
<comment type="tissue specificity">
    <text>Testis- and sperm-specific.</text>
</comment>
<gene>
    <name type="primary">SPA17</name>
    <name type="synonym">SP17</name>
</gene>
<dbReference type="EMBL" id="AF054289">
    <property type="protein sequence ID" value="AAC08024.1"/>
    <property type="molecule type" value="mRNA"/>
</dbReference>
<dbReference type="SMR" id="O62770"/>
<dbReference type="GO" id="GO:0016020">
    <property type="term" value="C:membrane"/>
    <property type="evidence" value="ECO:0007669"/>
    <property type="project" value="UniProtKB-SubCell"/>
</dbReference>
<dbReference type="GO" id="GO:0005516">
    <property type="term" value="F:calmodulin binding"/>
    <property type="evidence" value="ECO:0007669"/>
    <property type="project" value="TreeGrafter"/>
</dbReference>
<dbReference type="GO" id="GO:0007339">
    <property type="term" value="P:binding of sperm to zona pellucida"/>
    <property type="evidence" value="ECO:0007669"/>
    <property type="project" value="InterPro"/>
</dbReference>
<dbReference type="CDD" id="cd12100">
    <property type="entry name" value="DD_CABYR_SP17"/>
    <property type="match status" value="1"/>
</dbReference>
<dbReference type="FunFam" id="1.20.5.190:FF:000045">
    <property type="entry name" value="Sperm surface protein Sp17"/>
    <property type="match status" value="1"/>
</dbReference>
<dbReference type="FunFam" id="1.20.890.10:FF:000006">
    <property type="entry name" value="Sperm surface protein Sp17"/>
    <property type="match status" value="1"/>
</dbReference>
<dbReference type="Gene3D" id="1.20.5.190">
    <property type="match status" value="1"/>
</dbReference>
<dbReference type="Gene3D" id="1.20.890.10">
    <property type="entry name" value="cAMP-dependent protein kinase regulatory subunit, dimerization-anchoring domain"/>
    <property type="match status" value="1"/>
</dbReference>
<dbReference type="InterPro" id="IPR003117">
    <property type="entry name" value="cAMP_dep_PK_reg_su_I/II_a/b"/>
</dbReference>
<dbReference type="InterPro" id="IPR047579">
    <property type="entry name" value="DD_CABYR_SP17"/>
</dbReference>
<dbReference type="InterPro" id="IPR000048">
    <property type="entry name" value="IQ_motif_EF-hand-BS"/>
</dbReference>
<dbReference type="InterPro" id="IPR012105">
    <property type="entry name" value="Sp17"/>
</dbReference>
<dbReference type="PANTHER" id="PTHR10699:SF11">
    <property type="entry name" value="IGLOO, ISOFORM A"/>
    <property type="match status" value="1"/>
</dbReference>
<dbReference type="PANTHER" id="PTHR10699">
    <property type="entry name" value="NEUROMODULIN"/>
    <property type="match status" value="1"/>
</dbReference>
<dbReference type="Pfam" id="PF00612">
    <property type="entry name" value="IQ"/>
    <property type="match status" value="1"/>
</dbReference>
<dbReference type="Pfam" id="PF02197">
    <property type="entry name" value="RIIa"/>
    <property type="match status" value="1"/>
</dbReference>
<dbReference type="PIRSF" id="PIRSF016533">
    <property type="entry name" value="Sp17"/>
    <property type="match status" value="1"/>
</dbReference>
<dbReference type="SMART" id="SM00015">
    <property type="entry name" value="IQ"/>
    <property type="match status" value="1"/>
</dbReference>
<dbReference type="SMART" id="SM00394">
    <property type="entry name" value="RIIa"/>
    <property type="match status" value="1"/>
</dbReference>
<dbReference type="SUPFAM" id="SSF47391">
    <property type="entry name" value="Dimerization-anchoring domain of cAMP-dependent PK regulatory subunit"/>
    <property type="match status" value="1"/>
</dbReference>
<dbReference type="PROSITE" id="PS50096">
    <property type="entry name" value="IQ"/>
    <property type="match status" value="1"/>
</dbReference>
<evidence type="ECO:0000250" key="1"/>
<evidence type="ECO:0000255" key="2">
    <source>
        <dbReference type="PROSITE-ProRule" id="PRU00116"/>
    </source>
</evidence>
<evidence type="ECO:0000256" key="3">
    <source>
        <dbReference type="SAM" id="MobiDB-lite"/>
    </source>
</evidence>
<evidence type="ECO:0000305" key="4"/>
<organism>
    <name type="scientific">Notamacropus eugenii</name>
    <name type="common">Tammar wallaby</name>
    <name type="synonym">Macropus eugenii</name>
    <dbReference type="NCBI Taxonomy" id="9315"/>
    <lineage>
        <taxon>Eukaryota</taxon>
        <taxon>Metazoa</taxon>
        <taxon>Chordata</taxon>
        <taxon>Craniata</taxon>
        <taxon>Vertebrata</taxon>
        <taxon>Euteleostomi</taxon>
        <taxon>Mammalia</taxon>
        <taxon>Metatheria</taxon>
        <taxon>Diprotodontia</taxon>
        <taxon>Macropodidae</taxon>
        <taxon>Notamacropus</taxon>
    </lineage>
</organism>
<accession>O62770</accession>
<feature type="chain" id="PRO_0000181341" description="Sperm surface protein Sp17">
    <location>
        <begin position="1"/>
        <end position="153"/>
    </location>
</feature>
<feature type="domain" description="IQ" evidence="2">
    <location>
        <begin position="122"/>
        <end position="151"/>
    </location>
</feature>
<feature type="region of interest" description="Disordered" evidence="3">
    <location>
        <begin position="74"/>
        <end position="117"/>
    </location>
</feature>
<feature type="compositionally biased region" description="Basic and acidic residues" evidence="3">
    <location>
        <begin position="82"/>
        <end position="106"/>
    </location>
</feature>
<sequence>MSIPFSNTHYRIPQGFGNLLEGLTREILREQPDNIPAFAAAYFENLLEKREKTNFDPAEWGAKIDDRFYNNHAFKVPSGATESKEAPPEKSEPEKETPQEVVKEQETQVSFVEEVSTDDEEAAAAAVKIQAAFRGHKARKEVKIMKESSIEEQ</sequence>
<proteinExistence type="evidence at transcript level"/>
<reference key="1">
    <citation type="submission" date="1998-03" db="EMBL/GenBank/DDBJ databases">
        <authorList>
            <person name="Wen Y."/>
            <person name="O'Rand M.G."/>
        </authorList>
    </citation>
    <scope>NUCLEOTIDE SEQUENCE [MRNA]</scope>
    <source>
        <tissue>Testis</tissue>
    </source>
</reference>
<name>SP17_NOTEU</name>
<keyword id="KW-0472">Membrane</keyword>